<dbReference type="EC" id="2.3.2.29" evidence="1"/>
<dbReference type="EMBL" id="AE016823">
    <property type="protein sequence ID" value="AAS70513.1"/>
    <property type="molecule type" value="Genomic_DNA"/>
</dbReference>
<dbReference type="RefSeq" id="WP_000615647.1">
    <property type="nucleotide sequence ID" value="NC_005823.1"/>
</dbReference>
<dbReference type="SMR" id="Q72R21"/>
<dbReference type="KEGG" id="lic:LIC_11930"/>
<dbReference type="HOGENOM" id="CLU_077607_0_0_12"/>
<dbReference type="Proteomes" id="UP000007037">
    <property type="component" value="Chromosome I"/>
</dbReference>
<dbReference type="GO" id="GO:0005737">
    <property type="term" value="C:cytoplasm"/>
    <property type="evidence" value="ECO:0007669"/>
    <property type="project" value="UniProtKB-SubCell"/>
</dbReference>
<dbReference type="GO" id="GO:0004057">
    <property type="term" value="F:arginyl-tRNA--protein transferase activity"/>
    <property type="evidence" value="ECO:0007669"/>
    <property type="project" value="InterPro"/>
</dbReference>
<dbReference type="GO" id="GO:0008914">
    <property type="term" value="F:leucyl-tRNA--protein transferase activity"/>
    <property type="evidence" value="ECO:0007669"/>
    <property type="project" value="UniProtKB-UniRule"/>
</dbReference>
<dbReference type="GO" id="GO:0071596">
    <property type="term" value="P:ubiquitin-dependent protein catabolic process via the N-end rule pathway"/>
    <property type="evidence" value="ECO:0007669"/>
    <property type="project" value="InterPro"/>
</dbReference>
<dbReference type="HAMAP" id="MF_00689">
    <property type="entry name" value="Bpt"/>
    <property type="match status" value="1"/>
</dbReference>
<dbReference type="InterPro" id="IPR016181">
    <property type="entry name" value="Acyl_CoA_acyltransferase"/>
</dbReference>
<dbReference type="InterPro" id="IPR017138">
    <property type="entry name" value="Asp_Glu_LeuTrfase"/>
</dbReference>
<dbReference type="InterPro" id="IPR030700">
    <property type="entry name" value="N-end_Aminoacyl_Trfase"/>
</dbReference>
<dbReference type="InterPro" id="IPR007472">
    <property type="entry name" value="N-end_Aminoacyl_Trfase_C"/>
</dbReference>
<dbReference type="InterPro" id="IPR007471">
    <property type="entry name" value="N-end_Aminoacyl_Trfase_N"/>
</dbReference>
<dbReference type="NCBIfam" id="NF002346">
    <property type="entry name" value="PRK01305.2-3"/>
    <property type="match status" value="1"/>
</dbReference>
<dbReference type="PANTHER" id="PTHR21367">
    <property type="entry name" value="ARGININE-TRNA-PROTEIN TRANSFERASE 1"/>
    <property type="match status" value="1"/>
</dbReference>
<dbReference type="PANTHER" id="PTHR21367:SF1">
    <property type="entry name" value="ARGINYL-TRNA--PROTEIN TRANSFERASE 1"/>
    <property type="match status" value="1"/>
</dbReference>
<dbReference type="Pfam" id="PF04377">
    <property type="entry name" value="ATE_C"/>
    <property type="match status" value="1"/>
</dbReference>
<dbReference type="Pfam" id="PF04376">
    <property type="entry name" value="ATE_N"/>
    <property type="match status" value="1"/>
</dbReference>
<dbReference type="PIRSF" id="PIRSF037208">
    <property type="entry name" value="ATE_pro_prd"/>
    <property type="match status" value="1"/>
</dbReference>
<dbReference type="SUPFAM" id="SSF55729">
    <property type="entry name" value="Acyl-CoA N-acyltransferases (Nat)"/>
    <property type="match status" value="1"/>
</dbReference>
<sequence length="257" mass="30614">MIQNKLQNFVDTLPISPEKSCSYYPERLSQIQYFPFPEEISKEVLQFFFDSGFRRNGNILYRTSCCGCKDCLSYRIPLDQFVPSRNRKKLLKKNSDLKICFESPNLTLEKEILYLRYQRSRYQNFVIEESDQELLEGMRWNLFEYKENSLEMTLSLDGKILCFMILDFASDSLSAVYSVYDPDYPDRSLGSFAILSSILYAKELGMKYFHLGYFLPGHPNMDYKKYWTPAQIREPVSNENRWIETDDFQKRYSDFSW</sequence>
<protein>
    <recommendedName>
        <fullName evidence="1">Aspartate/glutamate leucyltransferase</fullName>
        <ecNumber evidence="1">2.3.2.29</ecNumber>
    </recommendedName>
</protein>
<comment type="function">
    <text evidence="1">Functions in the N-end rule pathway of protein degradation where it conjugates Leu from its aminoacyl-tRNA to the N-termini of proteins containing an N-terminal aspartate or glutamate.</text>
</comment>
<comment type="catalytic activity">
    <reaction evidence="1">
        <text>N-terminal L-glutamyl-[protein] + L-leucyl-tRNA(Leu) = N-terminal L-leucyl-L-glutamyl-[protein] + tRNA(Leu) + H(+)</text>
        <dbReference type="Rhea" id="RHEA:50412"/>
        <dbReference type="Rhea" id="RHEA-COMP:9613"/>
        <dbReference type="Rhea" id="RHEA-COMP:9622"/>
        <dbReference type="Rhea" id="RHEA-COMP:12664"/>
        <dbReference type="Rhea" id="RHEA-COMP:12668"/>
        <dbReference type="ChEBI" id="CHEBI:15378"/>
        <dbReference type="ChEBI" id="CHEBI:64721"/>
        <dbReference type="ChEBI" id="CHEBI:78442"/>
        <dbReference type="ChEBI" id="CHEBI:78494"/>
        <dbReference type="ChEBI" id="CHEBI:133041"/>
        <dbReference type="EC" id="2.3.2.29"/>
    </reaction>
</comment>
<comment type="catalytic activity">
    <reaction evidence="1">
        <text>N-terminal L-aspartyl-[protein] + L-leucyl-tRNA(Leu) = N-terminal L-leucyl-L-aspartyl-[protein] + tRNA(Leu) + H(+)</text>
        <dbReference type="Rhea" id="RHEA:50420"/>
        <dbReference type="Rhea" id="RHEA-COMP:9613"/>
        <dbReference type="Rhea" id="RHEA-COMP:9622"/>
        <dbReference type="Rhea" id="RHEA-COMP:12669"/>
        <dbReference type="Rhea" id="RHEA-COMP:12674"/>
        <dbReference type="ChEBI" id="CHEBI:15378"/>
        <dbReference type="ChEBI" id="CHEBI:64720"/>
        <dbReference type="ChEBI" id="CHEBI:78442"/>
        <dbReference type="ChEBI" id="CHEBI:78494"/>
        <dbReference type="ChEBI" id="CHEBI:133042"/>
        <dbReference type="EC" id="2.3.2.29"/>
    </reaction>
</comment>
<comment type="subcellular location">
    <subcellularLocation>
        <location evidence="1">Cytoplasm</location>
    </subcellularLocation>
</comment>
<comment type="similarity">
    <text evidence="1">Belongs to the R-transferase family. Bpt subfamily.</text>
</comment>
<keyword id="KW-0012">Acyltransferase</keyword>
<keyword id="KW-0963">Cytoplasm</keyword>
<keyword id="KW-0808">Transferase</keyword>
<gene>
    <name evidence="1" type="primary">bpt</name>
    <name type="ordered locus">LIC_11930</name>
</gene>
<name>BPT_LEPIC</name>
<feature type="chain" id="PRO_0000195105" description="Aspartate/glutamate leucyltransferase">
    <location>
        <begin position="1"/>
        <end position="257"/>
    </location>
</feature>
<organism>
    <name type="scientific">Leptospira interrogans serogroup Icterohaemorrhagiae serovar copenhageni (strain Fiocruz L1-130)</name>
    <dbReference type="NCBI Taxonomy" id="267671"/>
    <lineage>
        <taxon>Bacteria</taxon>
        <taxon>Pseudomonadati</taxon>
        <taxon>Spirochaetota</taxon>
        <taxon>Spirochaetia</taxon>
        <taxon>Leptospirales</taxon>
        <taxon>Leptospiraceae</taxon>
        <taxon>Leptospira</taxon>
    </lineage>
</organism>
<reference key="1">
    <citation type="journal article" date="2004" name="J. Bacteriol.">
        <title>Comparative genomics of two Leptospira interrogans serovars reveals novel insights into physiology and pathogenesis.</title>
        <authorList>
            <person name="Nascimento A.L.T.O."/>
            <person name="Ko A.I."/>
            <person name="Martins E.A.L."/>
            <person name="Monteiro-Vitorello C.B."/>
            <person name="Ho P.L."/>
            <person name="Haake D.A."/>
            <person name="Verjovski-Almeida S."/>
            <person name="Hartskeerl R.A."/>
            <person name="Marques M.V."/>
            <person name="Oliveira M.C."/>
            <person name="Menck C.F.M."/>
            <person name="Leite L.C.C."/>
            <person name="Carrer H."/>
            <person name="Coutinho L.L."/>
            <person name="Degrave W.M."/>
            <person name="Dellagostin O.A."/>
            <person name="El-Dorry H."/>
            <person name="Ferro E.S."/>
            <person name="Ferro M.I.T."/>
            <person name="Furlan L.R."/>
            <person name="Gamberini M."/>
            <person name="Giglioti E.A."/>
            <person name="Goes-Neto A."/>
            <person name="Goldman G.H."/>
            <person name="Goldman M.H.S."/>
            <person name="Harakava R."/>
            <person name="Jeronimo S.M.B."/>
            <person name="Junqueira-de-Azevedo I.L.M."/>
            <person name="Kimura E.T."/>
            <person name="Kuramae E.E."/>
            <person name="Lemos E.G.M."/>
            <person name="Lemos M.V.F."/>
            <person name="Marino C.L."/>
            <person name="Nunes L.R."/>
            <person name="de Oliveira R.C."/>
            <person name="Pereira G.G."/>
            <person name="Reis M.S."/>
            <person name="Schriefer A."/>
            <person name="Siqueira W.J."/>
            <person name="Sommer P."/>
            <person name="Tsai S.M."/>
            <person name="Simpson A.J.G."/>
            <person name="Ferro J.A."/>
            <person name="Camargo L.E.A."/>
            <person name="Kitajima J.P."/>
            <person name="Setubal J.C."/>
            <person name="Van Sluys M.A."/>
        </authorList>
    </citation>
    <scope>NUCLEOTIDE SEQUENCE [LARGE SCALE GENOMIC DNA]</scope>
    <source>
        <strain>Fiocruz L1-130</strain>
    </source>
</reference>
<proteinExistence type="inferred from homology"/>
<accession>Q72R21</accession>
<evidence type="ECO:0000255" key="1">
    <source>
        <dbReference type="HAMAP-Rule" id="MF_00689"/>
    </source>
</evidence>